<name>Y309_STRPI</name>
<comment type="similarity">
    <text evidence="1">Belongs to the UPF0297 family.</text>
</comment>
<gene>
    <name type="ordered locus">SPH_0309</name>
</gene>
<sequence length="88" mass="10227">MGFTEETVRFKLDDSNKKEISETLTDVYASLNDKGYNPINQIVGYVLSGDPAYVPRYNNARNQIRKYERDEIVEELVRYYLKGQGVDL</sequence>
<evidence type="ECO:0000255" key="1">
    <source>
        <dbReference type="HAMAP-Rule" id="MF_01507"/>
    </source>
</evidence>
<organism>
    <name type="scientific">Streptococcus pneumoniae (strain Hungary19A-6)</name>
    <dbReference type="NCBI Taxonomy" id="487214"/>
    <lineage>
        <taxon>Bacteria</taxon>
        <taxon>Bacillati</taxon>
        <taxon>Bacillota</taxon>
        <taxon>Bacilli</taxon>
        <taxon>Lactobacillales</taxon>
        <taxon>Streptococcaceae</taxon>
        <taxon>Streptococcus</taxon>
    </lineage>
</organism>
<dbReference type="EMBL" id="CP000936">
    <property type="protein sequence ID" value="ACA37001.1"/>
    <property type="molecule type" value="Genomic_DNA"/>
</dbReference>
<dbReference type="RefSeq" id="WP_000507059.1">
    <property type="nucleotide sequence ID" value="NC_010380.1"/>
</dbReference>
<dbReference type="SMR" id="B1I8I4"/>
<dbReference type="KEGG" id="spv:SPH_0309"/>
<dbReference type="HOGENOM" id="CLU_162466_0_0_9"/>
<dbReference type="Proteomes" id="UP000002163">
    <property type="component" value="Chromosome"/>
</dbReference>
<dbReference type="HAMAP" id="MF_01507">
    <property type="entry name" value="UPF0297"/>
    <property type="match status" value="1"/>
</dbReference>
<dbReference type="InterPro" id="IPR009309">
    <property type="entry name" value="IreB"/>
</dbReference>
<dbReference type="NCBIfam" id="NF003997">
    <property type="entry name" value="PRK05473.1"/>
    <property type="match status" value="1"/>
</dbReference>
<dbReference type="PANTHER" id="PTHR40067">
    <property type="entry name" value="UPF0297 PROTEIN YRZL"/>
    <property type="match status" value="1"/>
</dbReference>
<dbReference type="PANTHER" id="PTHR40067:SF1">
    <property type="entry name" value="UPF0297 PROTEIN YRZL"/>
    <property type="match status" value="1"/>
</dbReference>
<dbReference type="Pfam" id="PF06135">
    <property type="entry name" value="IreB"/>
    <property type="match status" value="1"/>
</dbReference>
<dbReference type="PIRSF" id="PIRSF037258">
    <property type="entry name" value="DUF965_bac"/>
    <property type="match status" value="1"/>
</dbReference>
<accession>B1I8I4</accession>
<proteinExistence type="inferred from homology"/>
<reference key="1">
    <citation type="journal article" date="2010" name="Genome Biol.">
        <title>Structure and dynamics of the pan-genome of Streptococcus pneumoniae and closely related species.</title>
        <authorList>
            <person name="Donati C."/>
            <person name="Hiller N.L."/>
            <person name="Tettelin H."/>
            <person name="Muzzi A."/>
            <person name="Croucher N.J."/>
            <person name="Angiuoli S.V."/>
            <person name="Oggioni M."/>
            <person name="Dunning Hotopp J.C."/>
            <person name="Hu F.Z."/>
            <person name="Riley D.R."/>
            <person name="Covacci A."/>
            <person name="Mitchell T.J."/>
            <person name="Bentley S.D."/>
            <person name="Kilian M."/>
            <person name="Ehrlich G.D."/>
            <person name="Rappuoli R."/>
            <person name="Moxon E.R."/>
            <person name="Masignani V."/>
        </authorList>
    </citation>
    <scope>NUCLEOTIDE SEQUENCE [LARGE SCALE GENOMIC DNA]</scope>
    <source>
        <strain>Hungary19A-6</strain>
    </source>
</reference>
<feature type="chain" id="PRO_1000198241" description="UPF0297 protein SPH_0309">
    <location>
        <begin position="1"/>
        <end position="88"/>
    </location>
</feature>
<protein>
    <recommendedName>
        <fullName evidence="1">UPF0297 protein SPH_0309</fullName>
    </recommendedName>
</protein>